<sequence length="127" mass="14421">MARIAGVDLPRDKRVEIALTYLYGVGLSRSQEVLSATGVNPDTRVKDLSDEDVAALRTYIETNYQIEGDLRRWEAMNIKRLADIGTYRGRRHRLGLPVRGQRTRTNARTRRGRRVTVAGKKKAPSKK</sequence>
<organism>
    <name type="scientific">Microcystis aeruginosa (strain NIES-843 / IAM M-2473)</name>
    <dbReference type="NCBI Taxonomy" id="449447"/>
    <lineage>
        <taxon>Bacteria</taxon>
        <taxon>Bacillati</taxon>
        <taxon>Cyanobacteriota</taxon>
        <taxon>Cyanophyceae</taxon>
        <taxon>Oscillatoriophycideae</taxon>
        <taxon>Chroococcales</taxon>
        <taxon>Microcystaceae</taxon>
        <taxon>Microcystis</taxon>
    </lineage>
</organism>
<feature type="chain" id="PRO_1000086245" description="Small ribosomal subunit protein uS13">
    <location>
        <begin position="1"/>
        <end position="127"/>
    </location>
</feature>
<feature type="region of interest" description="Disordered" evidence="2">
    <location>
        <begin position="97"/>
        <end position="127"/>
    </location>
</feature>
<feature type="compositionally biased region" description="Basic residues" evidence="2">
    <location>
        <begin position="101"/>
        <end position="127"/>
    </location>
</feature>
<keyword id="KW-0687">Ribonucleoprotein</keyword>
<keyword id="KW-0689">Ribosomal protein</keyword>
<keyword id="KW-0694">RNA-binding</keyword>
<keyword id="KW-0699">rRNA-binding</keyword>
<keyword id="KW-0820">tRNA-binding</keyword>
<gene>
    <name evidence="1" type="primary">rpsM</name>
    <name evidence="1" type="synonym">rps13</name>
    <name type="ordered locus">MAE_52560</name>
</gene>
<proteinExistence type="inferred from homology"/>
<dbReference type="EMBL" id="AP009552">
    <property type="protein sequence ID" value="BAG05078.1"/>
    <property type="molecule type" value="Genomic_DNA"/>
</dbReference>
<dbReference type="RefSeq" id="WP_002735415.1">
    <property type="nucleotide sequence ID" value="NC_010296.1"/>
</dbReference>
<dbReference type="SMR" id="B0JY40"/>
<dbReference type="STRING" id="449447.MAE_52560"/>
<dbReference type="PaxDb" id="449447-MAE_52560"/>
<dbReference type="EnsemblBacteria" id="BAG05078">
    <property type="protein sequence ID" value="BAG05078"/>
    <property type="gene ID" value="MAE_52560"/>
</dbReference>
<dbReference type="GeneID" id="66705715"/>
<dbReference type="KEGG" id="mar:MAE_52560"/>
<dbReference type="eggNOG" id="COG0099">
    <property type="taxonomic scope" value="Bacteria"/>
</dbReference>
<dbReference type="HOGENOM" id="CLU_103849_1_2_3"/>
<dbReference type="BioCyc" id="MAER449447:MAE_RS22850-MONOMER"/>
<dbReference type="Proteomes" id="UP000001510">
    <property type="component" value="Chromosome"/>
</dbReference>
<dbReference type="GO" id="GO:0005829">
    <property type="term" value="C:cytosol"/>
    <property type="evidence" value="ECO:0007669"/>
    <property type="project" value="TreeGrafter"/>
</dbReference>
<dbReference type="GO" id="GO:0015935">
    <property type="term" value="C:small ribosomal subunit"/>
    <property type="evidence" value="ECO:0007669"/>
    <property type="project" value="TreeGrafter"/>
</dbReference>
<dbReference type="GO" id="GO:0019843">
    <property type="term" value="F:rRNA binding"/>
    <property type="evidence" value="ECO:0007669"/>
    <property type="project" value="UniProtKB-UniRule"/>
</dbReference>
<dbReference type="GO" id="GO:0003735">
    <property type="term" value="F:structural constituent of ribosome"/>
    <property type="evidence" value="ECO:0007669"/>
    <property type="project" value="InterPro"/>
</dbReference>
<dbReference type="GO" id="GO:0000049">
    <property type="term" value="F:tRNA binding"/>
    <property type="evidence" value="ECO:0007669"/>
    <property type="project" value="UniProtKB-UniRule"/>
</dbReference>
<dbReference type="GO" id="GO:0006412">
    <property type="term" value="P:translation"/>
    <property type="evidence" value="ECO:0007669"/>
    <property type="project" value="UniProtKB-UniRule"/>
</dbReference>
<dbReference type="FunFam" id="1.10.8.50:FF:000001">
    <property type="entry name" value="30S ribosomal protein S13"/>
    <property type="match status" value="1"/>
</dbReference>
<dbReference type="FunFam" id="4.10.910.10:FF:000001">
    <property type="entry name" value="30S ribosomal protein S13"/>
    <property type="match status" value="1"/>
</dbReference>
<dbReference type="Gene3D" id="1.10.8.50">
    <property type="match status" value="1"/>
</dbReference>
<dbReference type="Gene3D" id="4.10.910.10">
    <property type="entry name" value="30s ribosomal protein s13, domain 2"/>
    <property type="match status" value="1"/>
</dbReference>
<dbReference type="HAMAP" id="MF_01315">
    <property type="entry name" value="Ribosomal_uS13"/>
    <property type="match status" value="1"/>
</dbReference>
<dbReference type="InterPro" id="IPR027437">
    <property type="entry name" value="Rbsml_uS13_C"/>
</dbReference>
<dbReference type="InterPro" id="IPR001892">
    <property type="entry name" value="Ribosomal_uS13"/>
</dbReference>
<dbReference type="InterPro" id="IPR010979">
    <property type="entry name" value="Ribosomal_uS13-like_H2TH"/>
</dbReference>
<dbReference type="InterPro" id="IPR019980">
    <property type="entry name" value="Ribosomal_uS13_bac-type"/>
</dbReference>
<dbReference type="InterPro" id="IPR018269">
    <property type="entry name" value="Ribosomal_uS13_CS"/>
</dbReference>
<dbReference type="NCBIfam" id="TIGR03631">
    <property type="entry name" value="uS13_bact"/>
    <property type="match status" value="1"/>
</dbReference>
<dbReference type="PANTHER" id="PTHR10871">
    <property type="entry name" value="30S RIBOSOMAL PROTEIN S13/40S RIBOSOMAL PROTEIN S18"/>
    <property type="match status" value="1"/>
</dbReference>
<dbReference type="PANTHER" id="PTHR10871:SF1">
    <property type="entry name" value="SMALL RIBOSOMAL SUBUNIT PROTEIN US13M"/>
    <property type="match status" value="1"/>
</dbReference>
<dbReference type="Pfam" id="PF00416">
    <property type="entry name" value="Ribosomal_S13"/>
    <property type="match status" value="1"/>
</dbReference>
<dbReference type="PIRSF" id="PIRSF002134">
    <property type="entry name" value="Ribosomal_S13"/>
    <property type="match status" value="1"/>
</dbReference>
<dbReference type="SUPFAM" id="SSF46946">
    <property type="entry name" value="S13-like H2TH domain"/>
    <property type="match status" value="1"/>
</dbReference>
<dbReference type="PROSITE" id="PS00646">
    <property type="entry name" value="RIBOSOMAL_S13_1"/>
    <property type="match status" value="1"/>
</dbReference>
<dbReference type="PROSITE" id="PS50159">
    <property type="entry name" value="RIBOSOMAL_S13_2"/>
    <property type="match status" value="1"/>
</dbReference>
<name>RS13_MICAN</name>
<accession>B0JY40</accession>
<comment type="function">
    <text evidence="1">Located at the top of the head of the 30S subunit, it contacts several helices of the 16S rRNA. In the 70S ribosome it contacts the 23S rRNA (bridge B1a) and protein L5 of the 50S subunit (bridge B1b), connecting the 2 subunits; these bridges are implicated in subunit movement. Contacts the tRNAs in the A and P-sites.</text>
</comment>
<comment type="subunit">
    <text evidence="1">Part of the 30S ribosomal subunit. Forms a loose heterodimer with protein S19. Forms two bridges to the 50S subunit in the 70S ribosome.</text>
</comment>
<comment type="similarity">
    <text evidence="1">Belongs to the universal ribosomal protein uS13 family.</text>
</comment>
<protein>
    <recommendedName>
        <fullName evidence="1">Small ribosomal subunit protein uS13</fullName>
    </recommendedName>
    <alternativeName>
        <fullName evidence="3">30S ribosomal protein S13</fullName>
    </alternativeName>
</protein>
<reference key="1">
    <citation type="journal article" date="2007" name="DNA Res.">
        <title>Complete genomic structure of the bloom-forming toxic cyanobacterium Microcystis aeruginosa NIES-843.</title>
        <authorList>
            <person name="Kaneko T."/>
            <person name="Nakajima N."/>
            <person name="Okamoto S."/>
            <person name="Suzuki I."/>
            <person name="Tanabe Y."/>
            <person name="Tamaoki M."/>
            <person name="Nakamura Y."/>
            <person name="Kasai F."/>
            <person name="Watanabe A."/>
            <person name="Kawashima K."/>
            <person name="Kishida Y."/>
            <person name="Ono A."/>
            <person name="Shimizu Y."/>
            <person name="Takahashi C."/>
            <person name="Minami C."/>
            <person name="Fujishiro T."/>
            <person name="Kohara M."/>
            <person name="Katoh M."/>
            <person name="Nakazaki N."/>
            <person name="Nakayama S."/>
            <person name="Yamada M."/>
            <person name="Tabata S."/>
            <person name="Watanabe M.M."/>
        </authorList>
    </citation>
    <scope>NUCLEOTIDE SEQUENCE [LARGE SCALE GENOMIC DNA]</scope>
    <source>
        <strain>NIES-843 / IAM M-247</strain>
    </source>
</reference>
<evidence type="ECO:0000255" key="1">
    <source>
        <dbReference type="HAMAP-Rule" id="MF_01315"/>
    </source>
</evidence>
<evidence type="ECO:0000256" key="2">
    <source>
        <dbReference type="SAM" id="MobiDB-lite"/>
    </source>
</evidence>
<evidence type="ECO:0000305" key="3"/>